<feature type="chain" id="PRO_0000083062" description="Methionyl-tRNA formyltransferase">
    <location>
        <begin position="1"/>
        <end position="311"/>
    </location>
</feature>
<feature type="binding site" evidence="1">
    <location>
        <begin position="110"/>
        <end position="113"/>
    </location>
    <ligand>
        <name>(6S)-5,6,7,8-tetrahydrofolate</name>
        <dbReference type="ChEBI" id="CHEBI:57453"/>
    </ligand>
</feature>
<name>FMT_STRP6</name>
<evidence type="ECO:0000255" key="1">
    <source>
        <dbReference type="HAMAP-Rule" id="MF_00182"/>
    </source>
</evidence>
<gene>
    <name evidence="1" type="primary">fmt</name>
    <name type="ordered locus">M6_Spy1384</name>
</gene>
<protein>
    <recommendedName>
        <fullName evidence="1">Methionyl-tRNA formyltransferase</fullName>
        <ecNumber evidence="1">2.1.2.9</ecNumber>
    </recommendedName>
</protein>
<dbReference type="EC" id="2.1.2.9" evidence="1"/>
<dbReference type="EMBL" id="CP000003">
    <property type="protein sequence ID" value="AAT87519.1"/>
    <property type="molecule type" value="Genomic_DNA"/>
</dbReference>
<dbReference type="RefSeq" id="WP_011184817.1">
    <property type="nucleotide sequence ID" value="NC_006086.1"/>
</dbReference>
<dbReference type="SMR" id="Q5XAP4"/>
<dbReference type="KEGG" id="spa:M6_Spy1384"/>
<dbReference type="HOGENOM" id="CLU_033347_1_1_9"/>
<dbReference type="Proteomes" id="UP000001167">
    <property type="component" value="Chromosome"/>
</dbReference>
<dbReference type="GO" id="GO:0005829">
    <property type="term" value="C:cytosol"/>
    <property type="evidence" value="ECO:0007669"/>
    <property type="project" value="TreeGrafter"/>
</dbReference>
<dbReference type="GO" id="GO:0004479">
    <property type="term" value="F:methionyl-tRNA formyltransferase activity"/>
    <property type="evidence" value="ECO:0007669"/>
    <property type="project" value="UniProtKB-UniRule"/>
</dbReference>
<dbReference type="CDD" id="cd08646">
    <property type="entry name" value="FMT_core_Met-tRNA-FMT_N"/>
    <property type="match status" value="1"/>
</dbReference>
<dbReference type="CDD" id="cd08704">
    <property type="entry name" value="Met_tRNA_FMT_C"/>
    <property type="match status" value="1"/>
</dbReference>
<dbReference type="Gene3D" id="3.10.25.10">
    <property type="entry name" value="Formyl transferase, C-terminal domain"/>
    <property type="match status" value="1"/>
</dbReference>
<dbReference type="Gene3D" id="3.40.50.170">
    <property type="entry name" value="Formyl transferase, N-terminal domain"/>
    <property type="match status" value="1"/>
</dbReference>
<dbReference type="HAMAP" id="MF_00182">
    <property type="entry name" value="Formyl_trans"/>
    <property type="match status" value="1"/>
</dbReference>
<dbReference type="InterPro" id="IPR005794">
    <property type="entry name" value="Fmt"/>
</dbReference>
<dbReference type="InterPro" id="IPR005793">
    <property type="entry name" value="Formyl_trans_C"/>
</dbReference>
<dbReference type="InterPro" id="IPR037022">
    <property type="entry name" value="Formyl_trans_C_sf"/>
</dbReference>
<dbReference type="InterPro" id="IPR002376">
    <property type="entry name" value="Formyl_transf_N"/>
</dbReference>
<dbReference type="InterPro" id="IPR036477">
    <property type="entry name" value="Formyl_transf_N_sf"/>
</dbReference>
<dbReference type="InterPro" id="IPR011034">
    <property type="entry name" value="Formyl_transferase-like_C_sf"/>
</dbReference>
<dbReference type="InterPro" id="IPR001555">
    <property type="entry name" value="GART_AS"/>
</dbReference>
<dbReference type="InterPro" id="IPR044135">
    <property type="entry name" value="Met-tRNA-FMT_C"/>
</dbReference>
<dbReference type="InterPro" id="IPR041711">
    <property type="entry name" value="Met-tRNA-FMT_N"/>
</dbReference>
<dbReference type="NCBIfam" id="TIGR00460">
    <property type="entry name" value="fmt"/>
    <property type="match status" value="1"/>
</dbReference>
<dbReference type="PANTHER" id="PTHR11138">
    <property type="entry name" value="METHIONYL-TRNA FORMYLTRANSFERASE"/>
    <property type="match status" value="1"/>
</dbReference>
<dbReference type="PANTHER" id="PTHR11138:SF5">
    <property type="entry name" value="METHIONYL-TRNA FORMYLTRANSFERASE, MITOCHONDRIAL"/>
    <property type="match status" value="1"/>
</dbReference>
<dbReference type="Pfam" id="PF02911">
    <property type="entry name" value="Formyl_trans_C"/>
    <property type="match status" value="1"/>
</dbReference>
<dbReference type="Pfam" id="PF00551">
    <property type="entry name" value="Formyl_trans_N"/>
    <property type="match status" value="1"/>
</dbReference>
<dbReference type="SUPFAM" id="SSF50486">
    <property type="entry name" value="FMT C-terminal domain-like"/>
    <property type="match status" value="1"/>
</dbReference>
<dbReference type="SUPFAM" id="SSF53328">
    <property type="entry name" value="Formyltransferase"/>
    <property type="match status" value="1"/>
</dbReference>
<dbReference type="PROSITE" id="PS00373">
    <property type="entry name" value="GART"/>
    <property type="match status" value="1"/>
</dbReference>
<organism>
    <name type="scientific">Streptococcus pyogenes serotype M6 (strain ATCC BAA-946 / MGAS10394)</name>
    <dbReference type="NCBI Taxonomy" id="286636"/>
    <lineage>
        <taxon>Bacteria</taxon>
        <taxon>Bacillati</taxon>
        <taxon>Bacillota</taxon>
        <taxon>Bacilli</taxon>
        <taxon>Lactobacillales</taxon>
        <taxon>Streptococcaceae</taxon>
        <taxon>Streptococcus</taxon>
    </lineage>
</organism>
<keyword id="KW-0648">Protein biosynthesis</keyword>
<keyword id="KW-0808">Transferase</keyword>
<sequence>MIKLLFMGTPQFSATVLKGLLDNPAYEILGVVTQPDRAVGRKKDIKVTPVKQLALEHGISIYQPEKLSGSQELIEITGLGADGIITAAFGQFLPTLLLDSVSFAINVHASLLPKYRGGAPIHYAIMNGDKEAGVTIMEMIKEMDAGDVVAKASTPILETDNVGTLFEKLAIIGRDLLLDSLPAYLSGELKPIPQDHSQATFSPNISPEQEKLDWTMSNQEVFNHIRGMNPWPVAHTFLEGQRLKIYEAQLAEGEGLPGQVIVKTKKSLVIATGQGALSLIVVQPAGKPKMSIIDFLNGIGRKLEVGDIIGR</sequence>
<proteinExistence type="inferred from homology"/>
<accession>Q5XAP4</accession>
<reference key="1">
    <citation type="journal article" date="2004" name="J. Infect. Dis.">
        <title>Progress toward characterization of the group A Streptococcus metagenome: complete genome sequence of a macrolide-resistant serotype M6 strain.</title>
        <authorList>
            <person name="Banks D.J."/>
            <person name="Porcella S.F."/>
            <person name="Barbian K.D."/>
            <person name="Beres S.B."/>
            <person name="Philips L.E."/>
            <person name="Voyich J.M."/>
            <person name="DeLeo F.R."/>
            <person name="Martin J.M."/>
            <person name="Somerville G.A."/>
            <person name="Musser J.M."/>
        </authorList>
    </citation>
    <scope>NUCLEOTIDE SEQUENCE [LARGE SCALE GENOMIC DNA]</scope>
    <source>
        <strain>ATCC BAA-946 / MGAS10394</strain>
    </source>
</reference>
<comment type="function">
    <text evidence="1">Attaches a formyl group to the free amino group of methionyl-tRNA(fMet). The formyl group appears to play a dual role in the initiator identity of N-formylmethionyl-tRNA by promoting its recognition by IF2 and preventing the misappropriation of this tRNA by the elongation apparatus.</text>
</comment>
<comment type="catalytic activity">
    <reaction evidence="1">
        <text>L-methionyl-tRNA(fMet) + (6R)-10-formyltetrahydrofolate = N-formyl-L-methionyl-tRNA(fMet) + (6S)-5,6,7,8-tetrahydrofolate + H(+)</text>
        <dbReference type="Rhea" id="RHEA:24380"/>
        <dbReference type="Rhea" id="RHEA-COMP:9952"/>
        <dbReference type="Rhea" id="RHEA-COMP:9953"/>
        <dbReference type="ChEBI" id="CHEBI:15378"/>
        <dbReference type="ChEBI" id="CHEBI:57453"/>
        <dbReference type="ChEBI" id="CHEBI:78530"/>
        <dbReference type="ChEBI" id="CHEBI:78844"/>
        <dbReference type="ChEBI" id="CHEBI:195366"/>
        <dbReference type="EC" id="2.1.2.9"/>
    </reaction>
</comment>
<comment type="similarity">
    <text evidence="1">Belongs to the Fmt family.</text>
</comment>